<comment type="function">
    <text evidence="1">Participates in the translocation of lipoproteins from the inner membrane to the outer membrane. Only forms a complex with a lipoprotein if the residue after the N-terminal Cys is not an aspartate (The Asp acts as a targeting signal to indicate that the lipoprotein should stay in the inner membrane) (By similarity).</text>
</comment>
<comment type="subunit">
    <text evidence="1">Monomer.</text>
</comment>
<comment type="subcellular location">
    <subcellularLocation>
        <location evidence="1">Periplasm</location>
    </subcellularLocation>
</comment>
<comment type="similarity">
    <text evidence="3">Belongs to the LolA family.</text>
</comment>
<protein>
    <recommendedName>
        <fullName>Outer-membrane lipoprotein carrier protein</fullName>
    </recommendedName>
</protein>
<evidence type="ECO:0000250" key="1"/>
<evidence type="ECO:0000255" key="2"/>
<evidence type="ECO:0000305" key="3"/>
<accession>P45263</accession>
<gene>
    <name type="primary">lolA</name>
    <name type="synonym">lplA</name>
    <name type="ordered locus">HI_1591</name>
</gene>
<proteinExistence type="inferred from homology"/>
<reference key="1">
    <citation type="journal article" date="1995" name="Science">
        <title>Whole-genome random sequencing and assembly of Haemophilus influenzae Rd.</title>
        <authorList>
            <person name="Fleischmann R.D."/>
            <person name="Adams M.D."/>
            <person name="White O."/>
            <person name="Clayton R.A."/>
            <person name="Kirkness E.F."/>
            <person name="Kerlavage A.R."/>
            <person name="Bult C.J."/>
            <person name="Tomb J.-F."/>
            <person name="Dougherty B.A."/>
            <person name="Merrick J.M."/>
            <person name="McKenney K."/>
            <person name="Sutton G.G."/>
            <person name="FitzHugh W."/>
            <person name="Fields C.A."/>
            <person name="Gocayne J.D."/>
            <person name="Scott J.D."/>
            <person name="Shirley R."/>
            <person name="Liu L.-I."/>
            <person name="Glodek A."/>
            <person name="Kelley J.M."/>
            <person name="Weidman J.F."/>
            <person name="Phillips C.A."/>
            <person name="Spriggs T."/>
            <person name="Hedblom E."/>
            <person name="Cotton M.D."/>
            <person name="Utterback T.R."/>
            <person name="Hanna M.C."/>
            <person name="Nguyen D.T."/>
            <person name="Saudek D.M."/>
            <person name="Brandon R.C."/>
            <person name="Fine L.D."/>
            <person name="Fritchman J.L."/>
            <person name="Fuhrmann J.L."/>
            <person name="Geoghagen N.S.M."/>
            <person name="Gnehm C.L."/>
            <person name="McDonald L.A."/>
            <person name="Small K.V."/>
            <person name="Fraser C.M."/>
            <person name="Smith H.O."/>
            <person name="Venter J.C."/>
        </authorList>
    </citation>
    <scope>NUCLEOTIDE SEQUENCE [LARGE SCALE GENOMIC DNA]</scope>
    <source>
        <strain>ATCC 51907 / DSM 11121 / KW20 / Rd</strain>
    </source>
</reference>
<name>LOLA_HAEIN</name>
<keyword id="KW-0143">Chaperone</keyword>
<keyword id="KW-0574">Periplasm</keyword>
<keyword id="KW-0653">Protein transport</keyword>
<keyword id="KW-1185">Reference proteome</keyword>
<keyword id="KW-0732">Signal</keyword>
<keyword id="KW-0813">Transport</keyword>
<feature type="signal peptide" evidence="2">
    <location>
        <begin position="1"/>
        <end position="22"/>
    </location>
</feature>
<feature type="chain" id="PRO_0000018260" description="Outer-membrane lipoprotein carrier protein">
    <location>
        <begin position="23"/>
        <end position="205"/>
    </location>
</feature>
<organism>
    <name type="scientific">Haemophilus influenzae (strain ATCC 51907 / DSM 11121 / KW20 / Rd)</name>
    <dbReference type="NCBI Taxonomy" id="71421"/>
    <lineage>
        <taxon>Bacteria</taxon>
        <taxon>Pseudomonadati</taxon>
        <taxon>Pseudomonadota</taxon>
        <taxon>Gammaproteobacteria</taxon>
        <taxon>Pasteurellales</taxon>
        <taxon>Pasteurellaceae</taxon>
        <taxon>Haemophilus</taxon>
    </lineage>
</organism>
<sequence length="205" mass="23104">MKKTTLKFAALTLLGLSNLALADAASELQMRLAKVDVLSAEFVQTVTSGSGKNVQQGSGKLQIKRPNLFRMETKTPQETQIISDGKTLWFYDPFVQQVTAQWVKNAVNNTPFVLLTSNDKSHWHQYTVTQQSDTFVLKPTLSTSNIKQFDIRVDANGILRNFSTTEKDGQTNLYVLRNITNQTLSDSLFQFKPEKGVEVDDQRKK</sequence>
<dbReference type="EMBL" id="L42023">
    <property type="protein sequence ID" value="AAC23239.1"/>
    <property type="molecule type" value="Genomic_DNA"/>
</dbReference>
<dbReference type="PIR" id="G64172">
    <property type="entry name" value="G64172"/>
</dbReference>
<dbReference type="RefSeq" id="NP_439736.1">
    <property type="nucleotide sequence ID" value="NC_000907.1"/>
</dbReference>
<dbReference type="SMR" id="P45263"/>
<dbReference type="STRING" id="71421.HI_1591"/>
<dbReference type="EnsemblBacteria" id="AAC23239">
    <property type="protein sequence ID" value="AAC23239"/>
    <property type="gene ID" value="HI_1591"/>
</dbReference>
<dbReference type="KEGG" id="hin:HI_1591"/>
<dbReference type="PATRIC" id="fig|71421.8.peg.1665"/>
<dbReference type="eggNOG" id="COG2834">
    <property type="taxonomic scope" value="Bacteria"/>
</dbReference>
<dbReference type="HOGENOM" id="CLU_087560_1_1_6"/>
<dbReference type="OrthoDB" id="9787361at2"/>
<dbReference type="PhylomeDB" id="P45263"/>
<dbReference type="BioCyc" id="HINF71421:G1GJ1-1607-MONOMER"/>
<dbReference type="Proteomes" id="UP000000579">
    <property type="component" value="Chromosome"/>
</dbReference>
<dbReference type="GO" id="GO:0030288">
    <property type="term" value="C:outer membrane-bounded periplasmic space"/>
    <property type="evidence" value="ECO:0000318"/>
    <property type="project" value="GO_Central"/>
</dbReference>
<dbReference type="GO" id="GO:0044874">
    <property type="term" value="P:lipoprotein localization to outer membrane"/>
    <property type="evidence" value="ECO:0000318"/>
    <property type="project" value="GO_Central"/>
</dbReference>
<dbReference type="GO" id="GO:0042953">
    <property type="term" value="P:lipoprotein transport"/>
    <property type="evidence" value="ECO:0000318"/>
    <property type="project" value="GO_Central"/>
</dbReference>
<dbReference type="CDD" id="cd16325">
    <property type="entry name" value="LolA"/>
    <property type="match status" value="1"/>
</dbReference>
<dbReference type="Gene3D" id="2.50.20.10">
    <property type="entry name" value="Lipoprotein localisation LolA/LolB/LppX"/>
    <property type="match status" value="1"/>
</dbReference>
<dbReference type="HAMAP" id="MF_00240">
    <property type="entry name" value="LolA"/>
    <property type="match status" value="1"/>
</dbReference>
<dbReference type="InterPro" id="IPR029046">
    <property type="entry name" value="LolA/LolB/LppX"/>
</dbReference>
<dbReference type="InterPro" id="IPR004564">
    <property type="entry name" value="OM_lipoprot_carrier_LolA-like"/>
</dbReference>
<dbReference type="InterPro" id="IPR018323">
    <property type="entry name" value="OM_lipoprot_carrier_LolA_Pbac"/>
</dbReference>
<dbReference type="NCBIfam" id="TIGR00547">
    <property type="entry name" value="lolA"/>
    <property type="match status" value="1"/>
</dbReference>
<dbReference type="PANTHER" id="PTHR35869">
    <property type="entry name" value="OUTER-MEMBRANE LIPOPROTEIN CARRIER PROTEIN"/>
    <property type="match status" value="1"/>
</dbReference>
<dbReference type="PANTHER" id="PTHR35869:SF1">
    <property type="entry name" value="OUTER-MEMBRANE LIPOPROTEIN CARRIER PROTEIN"/>
    <property type="match status" value="1"/>
</dbReference>
<dbReference type="Pfam" id="PF03548">
    <property type="entry name" value="LolA"/>
    <property type="match status" value="1"/>
</dbReference>
<dbReference type="SUPFAM" id="SSF89392">
    <property type="entry name" value="Prokaryotic lipoproteins and lipoprotein localization factors"/>
    <property type="match status" value="1"/>
</dbReference>